<name>TI11B_ARATH</name>
<reference key="1">
    <citation type="journal article" date="2000" name="Nature">
        <title>Sequence and analysis of chromosome 1 of the plant Arabidopsis thaliana.</title>
        <authorList>
            <person name="Theologis A."/>
            <person name="Ecker J.R."/>
            <person name="Palm C.J."/>
            <person name="Federspiel N.A."/>
            <person name="Kaul S."/>
            <person name="White O."/>
            <person name="Alonso J."/>
            <person name="Altafi H."/>
            <person name="Araujo R."/>
            <person name="Bowman C.L."/>
            <person name="Brooks S.Y."/>
            <person name="Buehler E."/>
            <person name="Chan A."/>
            <person name="Chao Q."/>
            <person name="Chen H."/>
            <person name="Cheuk R.F."/>
            <person name="Chin C.W."/>
            <person name="Chung M.K."/>
            <person name="Conn L."/>
            <person name="Conway A.B."/>
            <person name="Conway A.R."/>
            <person name="Creasy T.H."/>
            <person name="Dewar K."/>
            <person name="Dunn P."/>
            <person name="Etgu P."/>
            <person name="Feldblyum T.V."/>
            <person name="Feng J.-D."/>
            <person name="Fong B."/>
            <person name="Fujii C.Y."/>
            <person name="Gill J.E."/>
            <person name="Goldsmith A.D."/>
            <person name="Haas B."/>
            <person name="Hansen N.F."/>
            <person name="Hughes B."/>
            <person name="Huizar L."/>
            <person name="Hunter J.L."/>
            <person name="Jenkins J."/>
            <person name="Johnson-Hopson C."/>
            <person name="Khan S."/>
            <person name="Khaykin E."/>
            <person name="Kim C.J."/>
            <person name="Koo H.L."/>
            <person name="Kremenetskaia I."/>
            <person name="Kurtz D.B."/>
            <person name="Kwan A."/>
            <person name="Lam B."/>
            <person name="Langin-Hooper S."/>
            <person name="Lee A."/>
            <person name="Lee J.M."/>
            <person name="Lenz C.A."/>
            <person name="Li J.H."/>
            <person name="Li Y.-P."/>
            <person name="Lin X."/>
            <person name="Liu S.X."/>
            <person name="Liu Z.A."/>
            <person name="Luros J.S."/>
            <person name="Maiti R."/>
            <person name="Marziali A."/>
            <person name="Militscher J."/>
            <person name="Miranda M."/>
            <person name="Nguyen M."/>
            <person name="Nierman W.C."/>
            <person name="Osborne B.I."/>
            <person name="Pai G."/>
            <person name="Peterson J."/>
            <person name="Pham P.K."/>
            <person name="Rizzo M."/>
            <person name="Rooney T."/>
            <person name="Rowley D."/>
            <person name="Sakano H."/>
            <person name="Salzberg S.L."/>
            <person name="Schwartz J.R."/>
            <person name="Shinn P."/>
            <person name="Southwick A.M."/>
            <person name="Sun H."/>
            <person name="Tallon L.J."/>
            <person name="Tambunga G."/>
            <person name="Toriumi M.J."/>
            <person name="Town C.D."/>
            <person name="Utterback T."/>
            <person name="Van Aken S."/>
            <person name="Vaysberg M."/>
            <person name="Vysotskaia V.S."/>
            <person name="Walker M."/>
            <person name="Wu D."/>
            <person name="Yu G."/>
            <person name="Fraser C.M."/>
            <person name="Venter J.C."/>
            <person name="Davis R.W."/>
        </authorList>
    </citation>
    <scope>NUCLEOTIDE SEQUENCE [LARGE SCALE GENOMIC DNA]</scope>
    <source>
        <strain>cv. Columbia</strain>
    </source>
</reference>
<reference key="2">
    <citation type="journal article" date="2017" name="Plant J.">
        <title>Araport11: a complete reannotation of the Arabidopsis thaliana reference genome.</title>
        <authorList>
            <person name="Cheng C.Y."/>
            <person name="Krishnakumar V."/>
            <person name="Chan A.P."/>
            <person name="Thibaud-Nissen F."/>
            <person name="Schobel S."/>
            <person name="Town C.D."/>
        </authorList>
    </citation>
    <scope>GENOME REANNOTATION</scope>
    <source>
        <strain>cv. Columbia</strain>
    </source>
</reference>
<reference key="3">
    <citation type="journal article" date="2003" name="Science">
        <title>Empirical analysis of transcriptional activity in the Arabidopsis genome.</title>
        <authorList>
            <person name="Yamada K."/>
            <person name="Lim J."/>
            <person name="Dale J.M."/>
            <person name="Chen H."/>
            <person name="Shinn P."/>
            <person name="Palm C.J."/>
            <person name="Southwick A.M."/>
            <person name="Wu H.C."/>
            <person name="Kim C.J."/>
            <person name="Nguyen M."/>
            <person name="Pham P.K."/>
            <person name="Cheuk R.F."/>
            <person name="Karlin-Newmann G."/>
            <person name="Liu S.X."/>
            <person name="Lam B."/>
            <person name="Sakano H."/>
            <person name="Wu T."/>
            <person name="Yu G."/>
            <person name="Miranda M."/>
            <person name="Quach H.L."/>
            <person name="Tripp M."/>
            <person name="Chang C.H."/>
            <person name="Lee J.M."/>
            <person name="Toriumi M.J."/>
            <person name="Chan M.M."/>
            <person name="Tang C.C."/>
            <person name="Onodera C.S."/>
            <person name="Deng J.M."/>
            <person name="Akiyama K."/>
            <person name="Ansari Y."/>
            <person name="Arakawa T."/>
            <person name="Banh J."/>
            <person name="Banno F."/>
            <person name="Bowser L."/>
            <person name="Brooks S.Y."/>
            <person name="Carninci P."/>
            <person name="Chao Q."/>
            <person name="Choy N."/>
            <person name="Enju A."/>
            <person name="Goldsmith A.D."/>
            <person name="Gurjal M."/>
            <person name="Hansen N.F."/>
            <person name="Hayashizaki Y."/>
            <person name="Johnson-Hopson C."/>
            <person name="Hsuan V.W."/>
            <person name="Iida K."/>
            <person name="Karnes M."/>
            <person name="Khan S."/>
            <person name="Koesema E."/>
            <person name="Ishida J."/>
            <person name="Jiang P.X."/>
            <person name="Jones T."/>
            <person name="Kawai J."/>
            <person name="Kamiya A."/>
            <person name="Meyers C."/>
            <person name="Nakajima M."/>
            <person name="Narusaka M."/>
            <person name="Seki M."/>
            <person name="Sakurai T."/>
            <person name="Satou M."/>
            <person name="Tamse R."/>
            <person name="Vaysberg M."/>
            <person name="Wallender E.K."/>
            <person name="Wong C."/>
            <person name="Yamamura Y."/>
            <person name="Yuan S."/>
            <person name="Shinozaki K."/>
            <person name="Davis R.W."/>
            <person name="Theologis A."/>
            <person name="Ecker J.R."/>
        </authorList>
    </citation>
    <scope>NUCLEOTIDE SEQUENCE [LARGE SCALE MRNA]</scope>
    <source>
        <strain>cv. Columbia</strain>
    </source>
</reference>
<reference key="4">
    <citation type="submission" date="2002-03" db="EMBL/GenBank/DDBJ databases">
        <title>Full-length cDNA from Arabidopsis thaliana.</title>
        <authorList>
            <person name="Brover V.V."/>
            <person name="Troukhan M.E."/>
            <person name="Alexandrov N.A."/>
            <person name="Lu Y.-P."/>
            <person name="Flavell R.B."/>
            <person name="Feldmann K.A."/>
        </authorList>
    </citation>
    <scope>NUCLEOTIDE SEQUENCE [LARGE SCALE MRNA]</scope>
</reference>
<reference key="5">
    <citation type="journal article" date="2007" name="Nature">
        <title>JAZ repressor proteins are targets of the SCF(COI1) complex during jasmonate signalling.</title>
        <authorList>
            <person name="Thines B."/>
            <person name="Katsir L."/>
            <person name="Melotto M."/>
            <person name="Niu Y."/>
            <person name="Mandaokar A."/>
            <person name="Liu G."/>
            <person name="Nomura K."/>
            <person name="He S.Y."/>
            <person name="Howe G.A."/>
            <person name="Browse J."/>
        </authorList>
    </citation>
    <scope>SUBCELLULAR LOCATION</scope>
    <scope>INDUCTION BY JASMONATE</scope>
</reference>
<reference key="6">
    <citation type="journal article" date="2007" name="Nature">
        <title>The JAZ family of repressors is the missing link in jasmonate signalling.</title>
        <authorList>
            <person name="Chini A."/>
            <person name="Fonseca S."/>
            <person name="Fernandez G."/>
            <person name="Adie B."/>
            <person name="Chico J.M."/>
            <person name="Lorenzo O."/>
            <person name="Garcia-Casado G."/>
            <person name="Lopez-Vidriero I."/>
            <person name="Lozano F.M."/>
            <person name="Ponce M.R."/>
            <person name="Micol J.L."/>
            <person name="Solano R."/>
        </authorList>
    </citation>
    <scope>GENE FAMILY</scope>
    <scope>NOMENCLATURE</scope>
</reference>
<reference key="7">
    <citation type="journal article" date="2007" name="Plant Cell">
        <title>A downstream mediator in the growth repression limb of the jasmonate pathway.</title>
        <authorList>
            <person name="Yan Y."/>
            <person name="Stolz S."/>
            <person name="Chetelat A."/>
            <person name="Reymond P."/>
            <person name="Pagni M."/>
            <person name="Dubugnon L."/>
            <person name="Farmer E.E."/>
        </authorList>
    </citation>
    <scope>DOMAIN</scope>
</reference>
<reference key="8">
    <citation type="journal article" date="2007" name="Trends Plant Sci.">
        <title>The tify family previously known as ZIM.</title>
        <authorList>
            <person name="Vanholme B."/>
            <person name="Grunewald W."/>
            <person name="Bateman A."/>
            <person name="Kohchi T."/>
            <person name="Gheysen G."/>
        </authorList>
    </citation>
    <scope>GENE FAMILY</scope>
    <scope>NOMENCLATURE</scope>
</reference>
<reference key="9">
    <citation type="journal article" date="2008" name="Plant Physiol.">
        <title>Regulation and function of Arabidopsis JASMONATE ZIM-domain genes in response to wounding and herbivory.</title>
        <authorList>
            <person name="Chung H.S."/>
            <person name="Koo A.J."/>
            <person name="Gao X."/>
            <person name="Jayanty S."/>
            <person name="Thines B."/>
            <person name="Jones A.D."/>
            <person name="Howe G.A."/>
        </authorList>
    </citation>
    <scope>INDUCTION BY WOUNDING AND HERBIVORY</scope>
</reference>
<reference key="10">
    <citation type="journal article" date="2009" name="Plant Cell">
        <title>A critical role for the TIFY motif in repression of jasmonate signaling by a stabilized splice variant of the JASMONATE ZIM-domain protein JAZ10 in Arabidopsis.</title>
        <authorList>
            <person name="Chung H.S."/>
            <person name="Howe G.A."/>
        </authorList>
    </citation>
    <scope>FUNCTION</scope>
    <scope>INTERACTION WITH TIFY10A/JAZ1; TIFY10B/JAZ2; TIFY11A/JAZ5; TIFY5A/JAZ8; TIFY9/JAZ10 AND TIFY3B/JAZ12</scope>
    <scope>SUBUNIT</scope>
</reference>
<reference key="11">
    <citation type="journal article" date="2009" name="Plant J.">
        <title>The ZIM domain mediates homo- and heteromeric interactions between Arabidopsis JAZ proteins.</title>
        <authorList>
            <person name="Chini A."/>
            <person name="Fonseca S."/>
            <person name="Chico J.M."/>
            <person name="Fernandez-Calvo P."/>
            <person name="Solano R."/>
        </authorList>
    </citation>
    <scope>INTERACTION WITH MYC2</scope>
</reference>
<reference key="12">
    <citation type="journal article" date="2010" name="Nature">
        <title>NINJA connects the co-repressor TOPLESS to jasmonate signalling.</title>
        <authorList>
            <person name="Pauwels L."/>
            <person name="Barbero G.F."/>
            <person name="Geerinck J."/>
            <person name="Tilleman S."/>
            <person name="Grunewald W."/>
            <person name="Perez A.C."/>
            <person name="Chico J.M."/>
            <person name="Bossche R.V."/>
            <person name="Sewell J."/>
            <person name="Gil E."/>
            <person name="Garcia-Casado G."/>
            <person name="Witters E."/>
            <person name="Inze D."/>
            <person name="Long J.A."/>
            <person name="De Jaeger G."/>
            <person name="Solano R."/>
            <person name="Goossens A."/>
        </authorList>
    </citation>
    <scope>INTERACTION WITH AFPH2/NINJA</scope>
</reference>
<reference key="13">
    <citation type="journal article" date="2013" name="PLoS Pathog.">
        <title>Bacterial effector activates jasmonate signaling by directly targeting JAZ transcriptional repressors.</title>
        <authorList>
            <person name="Jiang S."/>
            <person name="Yao J."/>
            <person name="Ma K.-W."/>
            <person name="Zhou H."/>
            <person name="Song J."/>
            <person name="He S.Y."/>
            <person name="Ma W."/>
        </authorList>
    </citation>
    <scope>INTERACTION WITH PSEUDOMONAS SYRINGAE HOPZ1A (MICROBIAL INFECTION)</scope>
    <scope>SUBCELLULAR LOCATION (MICROBIAL INFECTION)</scope>
    <scope>DOMAIN</scope>
    <scope>ACETYLATION BY PSEUDOMONAS SYRINGAE HOPZ1A (MICROBIAL INFECTION)</scope>
    <scope>MUTAGENESIS OF 191-SER--LYS-200</scope>
    <source>
        <strain>cv. Columbia</strain>
    </source>
</reference>
<accession>Q9C9E3</accession>
<keyword id="KW-0007">Acetylation</keyword>
<keyword id="KW-1003">Cell membrane</keyword>
<keyword id="KW-1184">Jasmonic acid signaling pathway</keyword>
<keyword id="KW-0472">Membrane</keyword>
<keyword id="KW-0539">Nucleus</keyword>
<keyword id="KW-0611">Plant defense</keyword>
<keyword id="KW-1185">Reference proteome</keyword>
<keyword id="KW-0804">Transcription</keyword>
<keyword id="KW-0805">Transcription regulation</keyword>
<keyword id="KW-0832">Ubl conjugation</keyword>
<comment type="function">
    <text evidence="9">Repressor of jasmonate responses.</text>
</comment>
<comment type="subunit">
    <text evidence="9 10 11">Homo- and heterodimer. Interacts with MYC2, AFPH2/NINJA, TIFY10A/JAZ1, TIFY10B/JAZ2, TIFY11A/JAZ5, TIFY5A/JAZ8, TIFY9/JAZ10 and TIFY3B/JAZ12.</text>
</comment>
<comment type="subunit">
    <text evidence="12">(Microbial infection) Interacts with the pathogenic Pseudomonas syringae HopZ1a protein.</text>
</comment>
<comment type="interaction">
    <interactant intactId="EBI-2312120">
        <id>Q9C9E3</id>
    </interactant>
    <interactant intactId="EBI-1787005">
        <id>Q9SV55</id>
        <label>AFPH2</label>
    </interactant>
    <organismsDiffer>false</organismsDiffer>
    <experiments>9</experiments>
</comment>
<comment type="interaction">
    <interactant intactId="EBI-2312120">
        <id>Q9C9E3</id>
    </interactant>
    <interactant intactId="EBI-4434261">
        <id>Q9LNJ5</id>
        <label>BHLH13</label>
    </interactant>
    <organismsDiffer>false</organismsDiffer>
    <experiments>5</experiments>
</comment>
<comment type="interaction">
    <interactant intactId="EBI-2312120">
        <id>Q9C9E3</id>
    </interactant>
    <interactant intactId="EBI-1792336">
        <id>Q39204</id>
        <label>MYC2</label>
    </interactant>
    <organismsDiffer>false</organismsDiffer>
    <experiments>7</experiments>
</comment>
<comment type="interaction">
    <interactant intactId="EBI-2312120">
        <id>Q9C9E3</id>
    </interactant>
    <interactant intactId="EBI-15406909">
        <id>O49687</id>
        <label>MYC4</label>
    </interactant>
    <organismsDiffer>false</organismsDiffer>
    <experiments>3</experiments>
</comment>
<comment type="interaction">
    <interactant intactId="EBI-2312120">
        <id>Q9C9E3</id>
    </interactant>
    <interactant intactId="EBI-4426144">
        <id>Q9C9L2</id>
        <label>TCP15</label>
    </interactant>
    <organismsDiffer>false</organismsDiffer>
    <experiments>3</experiments>
</comment>
<comment type="subcellular location">
    <subcellularLocation>
        <location evidence="5 7 12">Nucleus</location>
    </subcellularLocation>
</comment>
<comment type="subcellular location">
    <subcellularLocation>
        <location evidence="5 12">Nucleus</location>
    </subcellularLocation>
    <subcellularLocation>
        <location evidence="12">Cell membrane</location>
    </subcellularLocation>
    <text evidence="12">(Microbial infection) Interacts with Pseudomonas syringae HopZ1a at the plasma membrane and in the nucleus.</text>
</comment>
<comment type="induction">
    <text evidence="7 8">Up-regulated by jasmonate, wounding and herbivory.</text>
</comment>
<comment type="induction">
    <text evidence="2">(Microbial infection) Triggered to degradation by the pathogenic Pseudomonas syringae HopZ1a protein in a COI1-dependent manner, thereby activating host jasmonate signaling.</text>
</comment>
<comment type="domain">
    <text evidence="12">The jas domain (186-210) is required for interaction with COI1 and Pseudomonas syringae HopZ1a.</text>
</comment>
<comment type="PTM">
    <text evidence="12">(Microbial infection) Acetylated by Pseudomonas syringae HopZ1a.</text>
</comment>
<comment type="PTM">
    <text evidence="1">Ubiquitinated. Targeted for degradation by the SCF(COI1) E3 ubiquitin ligase-proteasome pathway during jasmonate signaling.</text>
</comment>
<comment type="similarity">
    <text evidence="16">Belongs to the TIFY/JAZ family.</text>
</comment>
<protein>
    <recommendedName>
        <fullName evidence="13">Protein TIFY 11B</fullName>
    </recommendedName>
    <alternativeName>
        <fullName evidence="14 15">Jasmonate ZIM domain-containing protein 6</fullName>
    </alternativeName>
</protein>
<proteinExistence type="evidence at protein level"/>
<gene>
    <name evidence="13" type="primary">TIFY11B</name>
    <name evidence="14 15" type="synonym">JAZ6</name>
    <name evidence="17" type="ordered locus">At1g72450</name>
    <name evidence="18" type="ORF">T10D10.8</name>
</gene>
<sequence>MSTGQAPEKSNFSQRCSLLSRYLKEKGSFGNINMGLARKSDLELAGKFDLKGQQNVIKKVETSETRPFKLIQKFSIGEASTSTEDKAIYIDLSEPAKVAPESGNSQLTIFFGGKVMVFNEFPEDKAKEIMEVAKEANHVAVDSKNSQSHMNLDKSNVVIPDLNEPTSSGNNEDQETGQQHQVVERIARRASLHRFFAKRKDRAVARAPYQVNQHGSHLPPKPEMVAPSIKSGQSSQHIATPPKPKAHNHMPMEVDKKEGQSSKNLELKL</sequence>
<feature type="chain" id="PRO_0000300655" description="Protein TIFY 11B">
    <location>
        <begin position="1"/>
        <end position="269"/>
    </location>
</feature>
<feature type="domain" description="Tify" evidence="4">
    <location>
        <begin position="100"/>
        <end position="135"/>
    </location>
</feature>
<feature type="region of interest" description="Disordered" evidence="6">
    <location>
        <begin position="160"/>
        <end position="181"/>
    </location>
</feature>
<feature type="region of interest" description="Disordered" evidence="6">
    <location>
        <begin position="209"/>
        <end position="269"/>
    </location>
</feature>
<feature type="short sequence motif" description="Jas" evidence="3">
    <location>
        <begin position="186"/>
        <end position="210"/>
    </location>
</feature>
<feature type="short sequence motif" description="Nuclear localization signal" evidence="5">
    <location>
        <begin position="187"/>
        <end position="194"/>
    </location>
</feature>
<feature type="compositionally biased region" description="Polar residues" evidence="6">
    <location>
        <begin position="164"/>
        <end position="181"/>
    </location>
</feature>
<feature type="compositionally biased region" description="Basic and acidic residues" evidence="6">
    <location>
        <begin position="250"/>
        <end position="269"/>
    </location>
</feature>
<feature type="mutagenesis site" description="Impaired interaction with Pseudomonas syringae HopZ1a associated with the loss of HopZ1a-mediated acetylation and altered HopZ1a-triggered degradation." evidence="12">
    <location>
        <begin position="191"/>
        <end position="200"/>
    </location>
</feature>
<dbReference type="EMBL" id="AC016529">
    <property type="protein sequence ID" value="AAG52575.1"/>
    <property type="molecule type" value="Genomic_DNA"/>
</dbReference>
<dbReference type="EMBL" id="CP002684">
    <property type="protein sequence ID" value="AEE35326.1"/>
    <property type="molecule type" value="Genomic_DNA"/>
</dbReference>
<dbReference type="EMBL" id="AY059089">
    <property type="protein sequence ID" value="AAL15195.1"/>
    <property type="molecule type" value="mRNA"/>
</dbReference>
<dbReference type="EMBL" id="AY088035">
    <property type="protein sequence ID" value="AAM65581.1"/>
    <property type="molecule type" value="mRNA"/>
</dbReference>
<dbReference type="EMBL" id="AF370147">
    <property type="protein sequence ID" value="AAK43962.1"/>
    <property type="molecule type" value="mRNA"/>
</dbReference>
<dbReference type="PIR" id="F96748">
    <property type="entry name" value="F96748"/>
</dbReference>
<dbReference type="RefSeq" id="NP_565043.1">
    <property type="nucleotide sequence ID" value="NM_105904.4"/>
</dbReference>
<dbReference type="BioGRID" id="28796">
    <property type="interactions" value="28"/>
</dbReference>
<dbReference type="DIP" id="DIP-53274N"/>
<dbReference type="ELM" id="Q9C9E3"/>
<dbReference type="FunCoup" id="Q9C9E3">
    <property type="interactions" value="295"/>
</dbReference>
<dbReference type="IntAct" id="Q9C9E3">
    <property type="interactions" value="13"/>
</dbReference>
<dbReference type="STRING" id="3702.Q9C9E3"/>
<dbReference type="PaxDb" id="3702-AT1G72450.1"/>
<dbReference type="EnsemblPlants" id="AT1G72450.1">
    <property type="protein sequence ID" value="AT1G72450.1"/>
    <property type="gene ID" value="AT1G72450"/>
</dbReference>
<dbReference type="GeneID" id="843577"/>
<dbReference type="Gramene" id="AT1G72450.1">
    <property type="protein sequence ID" value="AT1G72450.1"/>
    <property type="gene ID" value="AT1G72450"/>
</dbReference>
<dbReference type="KEGG" id="ath:AT1G72450"/>
<dbReference type="Araport" id="AT1G72450"/>
<dbReference type="TAIR" id="AT1G72450">
    <property type="gene designation" value="JAZ6"/>
</dbReference>
<dbReference type="eggNOG" id="ENOG502S4J6">
    <property type="taxonomic scope" value="Eukaryota"/>
</dbReference>
<dbReference type="HOGENOM" id="CLU_051749_1_0_1"/>
<dbReference type="InParanoid" id="Q9C9E3"/>
<dbReference type="OMA" id="NHMPMEV"/>
<dbReference type="OrthoDB" id="1937734at2759"/>
<dbReference type="PhylomeDB" id="Q9C9E3"/>
<dbReference type="PRO" id="PR:Q9C9E3"/>
<dbReference type="Proteomes" id="UP000006548">
    <property type="component" value="Chromosome 1"/>
</dbReference>
<dbReference type="ExpressionAtlas" id="Q9C9E3">
    <property type="expression patterns" value="baseline and differential"/>
</dbReference>
<dbReference type="GO" id="GO:0005634">
    <property type="term" value="C:nucleus"/>
    <property type="evidence" value="ECO:0000314"/>
    <property type="project" value="UniProtKB"/>
</dbReference>
<dbReference type="GO" id="GO:0005886">
    <property type="term" value="C:plasma membrane"/>
    <property type="evidence" value="ECO:0000314"/>
    <property type="project" value="UniProtKB"/>
</dbReference>
<dbReference type="GO" id="GO:0006952">
    <property type="term" value="P:defense response"/>
    <property type="evidence" value="ECO:0007669"/>
    <property type="project" value="UniProtKB-KW"/>
</dbReference>
<dbReference type="GO" id="GO:0009753">
    <property type="term" value="P:response to jasmonic acid"/>
    <property type="evidence" value="ECO:0000270"/>
    <property type="project" value="TAIR"/>
</dbReference>
<dbReference type="GO" id="GO:0009611">
    <property type="term" value="P:response to wounding"/>
    <property type="evidence" value="ECO:0000270"/>
    <property type="project" value="TAIR"/>
</dbReference>
<dbReference type="InterPro" id="IPR018467">
    <property type="entry name" value="CCT_CS"/>
</dbReference>
<dbReference type="InterPro" id="IPR040390">
    <property type="entry name" value="TIFY/JAZ"/>
</dbReference>
<dbReference type="InterPro" id="IPR010399">
    <property type="entry name" value="Tify_dom"/>
</dbReference>
<dbReference type="PANTHER" id="PTHR33077:SF68">
    <property type="entry name" value="PROTEIN TIFY 11B"/>
    <property type="match status" value="1"/>
</dbReference>
<dbReference type="PANTHER" id="PTHR33077">
    <property type="entry name" value="PROTEIN TIFY 4A-RELATED-RELATED"/>
    <property type="match status" value="1"/>
</dbReference>
<dbReference type="Pfam" id="PF09425">
    <property type="entry name" value="Jas_motif"/>
    <property type="match status" value="1"/>
</dbReference>
<dbReference type="Pfam" id="PF06200">
    <property type="entry name" value="tify"/>
    <property type="match status" value="1"/>
</dbReference>
<dbReference type="SMART" id="SM00979">
    <property type="entry name" value="TIFY"/>
    <property type="match status" value="1"/>
</dbReference>
<dbReference type="PROSITE" id="PS51320">
    <property type="entry name" value="TIFY"/>
    <property type="match status" value="1"/>
</dbReference>
<organism>
    <name type="scientific">Arabidopsis thaliana</name>
    <name type="common">Mouse-ear cress</name>
    <dbReference type="NCBI Taxonomy" id="3702"/>
    <lineage>
        <taxon>Eukaryota</taxon>
        <taxon>Viridiplantae</taxon>
        <taxon>Streptophyta</taxon>
        <taxon>Embryophyta</taxon>
        <taxon>Tracheophyta</taxon>
        <taxon>Spermatophyta</taxon>
        <taxon>Magnoliopsida</taxon>
        <taxon>eudicotyledons</taxon>
        <taxon>Gunneridae</taxon>
        <taxon>Pentapetalae</taxon>
        <taxon>rosids</taxon>
        <taxon>malvids</taxon>
        <taxon>Brassicales</taxon>
        <taxon>Brassicaceae</taxon>
        <taxon>Camelineae</taxon>
        <taxon>Arabidopsis</taxon>
    </lineage>
</organism>
<evidence type="ECO:0000250" key="1">
    <source>
        <dbReference type="UniProtKB" id="Q7XPM8"/>
    </source>
</evidence>
<evidence type="ECO:0000250" key="2">
    <source>
        <dbReference type="UniProtKB" id="Q9LMA8"/>
    </source>
</evidence>
<evidence type="ECO:0000255" key="3"/>
<evidence type="ECO:0000255" key="4">
    <source>
        <dbReference type="PROSITE-ProRule" id="PRU00650"/>
    </source>
</evidence>
<evidence type="ECO:0000255" key="5">
    <source>
        <dbReference type="PROSITE-ProRule" id="PRU00768"/>
    </source>
</evidence>
<evidence type="ECO:0000256" key="6">
    <source>
        <dbReference type="SAM" id="MobiDB-lite"/>
    </source>
</evidence>
<evidence type="ECO:0000269" key="7">
    <source>
    </source>
</evidence>
<evidence type="ECO:0000269" key="8">
    <source>
    </source>
</evidence>
<evidence type="ECO:0000269" key="9">
    <source>
    </source>
</evidence>
<evidence type="ECO:0000269" key="10">
    <source>
    </source>
</evidence>
<evidence type="ECO:0000269" key="11">
    <source>
    </source>
</evidence>
<evidence type="ECO:0000269" key="12">
    <source>
    </source>
</evidence>
<evidence type="ECO:0000303" key="13">
    <source>
    </source>
</evidence>
<evidence type="ECO:0000303" key="14">
    <source>
    </source>
</evidence>
<evidence type="ECO:0000303" key="15">
    <source>
    </source>
</evidence>
<evidence type="ECO:0000305" key="16"/>
<evidence type="ECO:0000312" key="17">
    <source>
        <dbReference type="Araport" id="AT1G72450"/>
    </source>
</evidence>
<evidence type="ECO:0000312" key="18">
    <source>
        <dbReference type="EMBL" id="AAG52575.1"/>
    </source>
</evidence>